<sequence length="917" mass="104886">MDYKETLLMPKTDFPMRGGLPNKEPQIQEKWDAEDQYHKALEKNKGNETFILHDGPPYANGNLHMGHALNKILKDFIVRYKTMQGFYAPYVPGWDTHGLPIEQALTKKGVDRKKMSTAEFREKCKEFALEQIELQKKDFRRLGVRGDFNDPYITLKPEYEAAQIRIFGEMADKGLIYKGKKPVYWSPSSESSLAEAEIEYHDKRSASIYVAFDVKDDKGVVDADAKFIIWTTTPWTIPSNVAITVHPELKYGQYNVNGEKYIIAEALSDAVAEALDWDKASIKLEKEYTGKELEYVVAQHPFLDRESLVINGDHVTTDAGTGCVHTAPGHGEDDYIVGQKYELPVISPIDDKGVFTEEGGQFEGMFYDKANKAVTDLLTEKGALLKLDFITHSYPHDWRTKKPVIFRATPQWFASISKVRQDILDAIENTNFKVNWGKTRIYNMVRDRGEWVISRQRVWGVPLPVFYAENGEIIMTKETVNHVADLFAEHGSNIWFEREAKDLLPEGFTHPGSPNGTFTKETDIMDVWFDSGSSHRGVLETRPELSFPADMYLEGSDQYRGWFNSSITTSVATRGVSPYKFLLSHGFVMDGEGKKMSKSLGNVIVPDQVVKQKGADIARLWVSSTDYLADVRISDEILKQTSDVYRKIRNTLRFMLGNINDFNPDTDSIPESELLEVDRYLLNRLREFTASTINNYENFDYLNIYQEVQNFINVELSNFYLDYGKDILYIEQRDSHIRRSMQTVLYQILVDMTKLLAPILVHTAEEVWSHTPHVKEESVHLADMPKVVEVDQALLDKWRTFMNLRDDVNRALETARNEKVIGKSLEAKVTIASNDKFNASEFLTSFDALHQLFIVSQVKVVDKLDDQATAYEHGDIVIEHADGEKCERCWNYSEDLGAVDELTHLCPRCQQVVKSLV</sequence>
<name>SYI_STAA3</name>
<protein>
    <recommendedName>
        <fullName evidence="1">Isoleucine--tRNA ligase</fullName>
        <ecNumber evidence="1">6.1.1.5</ecNumber>
    </recommendedName>
    <alternativeName>
        <fullName evidence="1">Isoleucyl-tRNA synthetase</fullName>
        <shortName evidence="1">IleRS</shortName>
    </alternativeName>
</protein>
<accession>Q2FHP4</accession>
<gene>
    <name evidence="1" type="primary">ileS</name>
    <name type="ordered locus">SAUSA300_1087</name>
</gene>
<proteinExistence type="inferred from homology"/>
<reference key="1">
    <citation type="journal article" date="2006" name="Lancet">
        <title>Complete genome sequence of USA300, an epidemic clone of community-acquired meticillin-resistant Staphylococcus aureus.</title>
        <authorList>
            <person name="Diep B.A."/>
            <person name="Gill S.R."/>
            <person name="Chang R.F."/>
            <person name="Phan T.H."/>
            <person name="Chen J.H."/>
            <person name="Davidson M.G."/>
            <person name="Lin F."/>
            <person name="Lin J."/>
            <person name="Carleton H.A."/>
            <person name="Mongodin E.F."/>
            <person name="Sensabaugh G.F."/>
            <person name="Perdreau-Remington F."/>
        </authorList>
    </citation>
    <scope>NUCLEOTIDE SEQUENCE [LARGE SCALE GENOMIC DNA]</scope>
    <source>
        <strain>USA300</strain>
    </source>
</reference>
<comment type="function">
    <text evidence="1">Catalyzes the attachment of isoleucine to tRNA(Ile). As IleRS can inadvertently accommodate and process structurally similar amino acids such as valine, to avoid such errors it has two additional distinct tRNA(Ile)-dependent editing activities. One activity is designated as 'pretransfer' editing and involves the hydrolysis of activated Val-AMP. The other activity is designated 'posttransfer' editing and involves deacylation of mischarged Val-tRNA(Ile).</text>
</comment>
<comment type="catalytic activity">
    <reaction evidence="1">
        <text>tRNA(Ile) + L-isoleucine + ATP = L-isoleucyl-tRNA(Ile) + AMP + diphosphate</text>
        <dbReference type="Rhea" id="RHEA:11060"/>
        <dbReference type="Rhea" id="RHEA-COMP:9666"/>
        <dbReference type="Rhea" id="RHEA-COMP:9695"/>
        <dbReference type="ChEBI" id="CHEBI:30616"/>
        <dbReference type="ChEBI" id="CHEBI:33019"/>
        <dbReference type="ChEBI" id="CHEBI:58045"/>
        <dbReference type="ChEBI" id="CHEBI:78442"/>
        <dbReference type="ChEBI" id="CHEBI:78528"/>
        <dbReference type="ChEBI" id="CHEBI:456215"/>
        <dbReference type="EC" id="6.1.1.5"/>
    </reaction>
</comment>
<comment type="cofactor">
    <cofactor evidence="1">
        <name>Zn(2+)</name>
        <dbReference type="ChEBI" id="CHEBI:29105"/>
    </cofactor>
    <text evidence="1">Binds 1 zinc ion per subunit.</text>
</comment>
<comment type="subunit">
    <text evidence="1">Monomer.</text>
</comment>
<comment type="subcellular location">
    <subcellularLocation>
        <location evidence="1">Cytoplasm</location>
    </subcellularLocation>
</comment>
<comment type="domain">
    <text evidence="1">IleRS has two distinct active sites: one for aminoacylation and one for editing. The misactivated valine is translocated from the active site to the editing site, which sterically excludes the correctly activated isoleucine. The single editing site contains two valyl binding pockets, one specific for each substrate (Val-AMP or Val-tRNA(Ile)).</text>
</comment>
<comment type="similarity">
    <text evidence="1">Belongs to the class-I aminoacyl-tRNA synthetase family. IleS type 1 subfamily.</text>
</comment>
<organism>
    <name type="scientific">Staphylococcus aureus (strain USA300)</name>
    <dbReference type="NCBI Taxonomy" id="367830"/>
    <lineage>
        <taxon>Bacteria</taxon>
        <taxon>Bacillati</taxon>
        <taxon>Bacillota</taxon>
        <taxon>Bacilli</taxon>
        <taxon>Bacillales</taxon>
        <taxon>Staphylococcaceae</taxon>
        <taxon>Staphylococcus</taxon>
    </lineage>
</organism>
<evidence type="ECO:0000255" key="1">
    <source>
        <dbReference type="HAMAP-Rule" id="MF_02002"/>
    </source>
</evidence>
<feature type="chain" id="PRO_1000022128" description="Isoleucine--tRNA ligase">
    <location>
        <begin position="1"/>
        <end position="917"/>
    </location>
</feature>
<feature type="short sequence motif" description="'HIGH' region">
    <location>
        <begin position="57"/>
        <end position="67"/>
    </location>
</feature>
<feature type="short sequence motif" description="'KMSKS' region">
    <location>
        <begin position="595"/>
        <end position="599"/>
    </location>
</feature>
<feature type="binding site" evidence="1">
    <location>
        <position position="554"/>
    </location>
    <ligand>
        <name>L-isoleucyl-5'-AMP</name>
        <dbReference type="ChEBI" id="CHEBI:178002"/>
    </ligand>
</feature>
<feature type="binding site" evidence="1">
    <location>
        <position position="598"/>
    </location>
    <ligand>
        <name>ATP</name>
        <dbReference type="ChEBI" id="CHEBI:30616"/>
    </ligand>
</feature>
<feature type="binding site" evidence="1">
    <location>
        <position position="886"/>
    </location>
    <ligand>
        <name>Zn(2+)</name>
        <dbReference type="ChEBI" id="CHEBI:29105"/>
    </ligand>
</feature>
<feature type="binding site" evidence="1">
    <location>
        <position position="889"/>
    </location>
    <ligand>
        <name>Zn(2+)</name>
        <dbReference type="ChEBI" id="CHEBI:29105"/>
    </ligand>
</feature>
<feature type="binding site" evidence="1">
    <location>
        <position position="906"/>
    </location>
    <ligand>
        <name>Zn(2+)</name>
        <dbReference type="ChEBI" id="CHEBI:29105"/>
    </ligand>
</feature>
<feature type="binding site" evidence="1">
    <location>
        <position position="909"/>
    </location>
    <ligand>
        <name>Zn(2+)</name>
        <dbReference type="ChEBI" id="CHEBI:29105"/>
    </ligand>
</feature>
<keyword id="KW-0030">Aminoacyl-tRNA synthetase</keyword>
<keyword id="KW-0067">ATP-binding</keyword>
<keyword id="KW-0963">Cytoplasm</keyword>
<keyword id="KW-0436">Ligase</keyword>
<keyword id="KW-0479">Metal-binding</keyword>
<keyword id="KW-0547">Nucleotide-binding</keyword>
<keyword id="KW-0648">Protein biosynthesis</keyword>
<keyword id="KW-0862">Zinc</keyword>
<dbReference type="EC" id="6.1.1.5" evidence="1"/>
<dbReference type="EMBL" id="CP000255">
    <property type="protein sequence ID" value="ABD21906.1"/>
    <property type="molecule type" value="Genomic_DNA"/>
</dbReference>
<dbReference type="RefSeq" id="WP_000384691.1">
    <property type="nucleotide sequence ID" value="NZ_CP027476.1"/>
</dbReference>
<dbReference type="SMR" id="Q2FHP4"/>
<dbReference type="KEGG" id="saa:SAUSA300_1087"/>
<dbReference type="HOGENOM" id="CLU_001493_7_1_9"/>
<dbReference type="OMA" id="HCWRCKT"/>
<dbReference type="Proteomes" id="UP000001939">
    <property type="component" value="Chromosome"/>
</dbReference>
<dbReference type="GO" id="GO:0005829">
    <property type="term" value="C:cytosol"/>
    <property type="evidence" value="ECO:0007669"/>
    <property type="project" value="TreeGrafter"/>
</dbReference>
<dbReference type="GO" id="GO:0002161">
    <property type="term" value="F:aminoacyl-tRNA deacylase activity"/>
    <property type="evidence" value="ECO:0007669"/>
    <property type="project" value="InterPro"/>
</dbReference>
<dbReference type="GO" id="GO:0005524">
    <property type="term" value="F:ATP binding"/>
    <property type="evidence" value="ECO:0007669"/>
    <property type="project" value="UniProtKB-UniRule"/>
</dbReference>
<dbReference type="GO" id="GO:0004822">
    <property type="term" value="F:isoleucine-tRNA ligase activity"/>
    <property type="evidence" value="ECO:0007669"/>
    <property type="project" value="UniProtKB-UniRule"/>
</dbReference>
<dbReference type="GO" id="GO:0000049">
    <property type="term" value="F:tRNA binding"/>
    <property type="evidence" value="ECO:0007669"/>
    <property type="project" value="InterPro"/>
</dbReference>
<dbReference type="GO" id="GO:0008270">
    <property type="term" value="F:zinc ion binding"/>
    <property type="evidence" value="ECO:0007669"/>
    <property type="project" value="UniProtKB-UniRule"/>
</dbReference>
<dbReference type="GO" id="GO:0006428">
    <property type="term" value="P:isoleucyl-tRNA aminoacylation"/>
    <property type="evidence" value="ECO:0007669"/>
    <property type="project" value="UniProtKB-UniRule"/>
</dbReference>
<dbReference type="CDD" id="cd07960">
    <property type="entry name" value="Anticodon_Ia_Ile_BEm"/>
    <property type="match status" value="1"/>
</dbReference>
<dbReference type="CDD" id="cd00818">
    <property type="entry name" value="IleRS_core"/>
    <property type="match status" value="1"/>
</dbReference>
<dbReference type="FunFam" id="1.10.10.830:FF:000001">
    <property type="entry name" value="Isoleucine--tRNA ligase"/>
    <property type="match status" value="1"/>
</dbReference>
<dbReference type="FunFam" id="1.10.730.20:FF:000001">
    <property type="entry name" value="Isoleucine--tRNA ligase"/>
    <property type="match status" value="1"/>
</dbReference>
<dbReference type="FunFam" id="3.40.50.620:FF:000152">
    <property type="entry name" value="Isoleucine--tRNA ligase"/>
    <property type="match status" value="1"/>
</dbReference>
<dbReference type="FunFam" id="3.90.740.10:FF:000006">
    <property type="entry name" value="Isoleucine--tRNA ligase"/>
    <property type="match status" value="1"/>
</dbReference>
<dbReference type="Gene3D" id="1.10.730.20">
    <property type="match status" value="1"/>
</dbReference>
<dbReference type="Gene3D" id="3.40.50.620">
    <property type="entry name" value="HUPs"/>
    <property type="match status" value="2"/>
</dbReference>
<dbReference type="Gene3D" id="1.10.10.830">
    <property type="entry name" value="Ile-tRNA synthetase CP2 domain-like"/>
    <property type="match status" value="1"/>
</dbReference>
<dbReference type="HAMAP" id="MF_02002">
    <property type="entry name" value="Ile_tRNA_synth_type1"/>
    <property type="match status" value="1"/>
</dbReference>
<dbReference type="InterPro" id="IPR001412">
    <property type="entry name" value="aa-tRNA-synth_I_CS"/>
</dbReference>
<dbReference type="InterPro" id="IPR002300">
    <property type="entry name" value="aa-tRNA-synth_Ia"/>
</dbReference>
<dbReference type="InterPro" id="IPR033708">
    <property type="entry name" value="Anticodon_Ile_BEm"/>
</dbReference>
<dbReference type="InterPro" id="IPR002301">
    <property type="entry name" value="Ile-tRNA-ligase"/>
</dbReference>
<dbReference type="InterPro" id="IPR023585">
    <property type="entry name" value="Ile-tRNA-ligase_type1"/>
</dbReference>
<dbReference type="InterPro" id="IPR050081">
    <property type="entry name" value="Ile-tRNA_ligase"/>
</dbReference>
<dbReference type="InterPro" id="IPR013155">
    <property type="entry name" value="M/V/L/I-tRNA-synth_anticd-bd"/>
</dbReference>
<dbReference type="InterPro" id="IPR014729">
    <property type="entry name" value="Rossmann-like_a/b/a_fold"/>
</dbReference>
<dbReference type="InterPro" id="IPR009080">
    <property type="entry name" value="tRNAsynth_Ia_anticodon-bd"/>
</dbReference>
<dbReference type="InterPro" id="IPR009008">
    <property type="entry name" value="Val/Leu/Ile-tRNA-synth_edit"/>
</dbReference>
<dbReference type="InterPro" id="IPR010663">
    <property type="entry name" value="Znf_FPG/IleRS"/>
</dbReference>
<dbReference type="NCBIfam" id="TIGR00392">
    <property type="entry name" value="ileS"/>
    <property type="match status" value="1"/>
</dbReference>
<dbReference type="PANTHER" id="PTHR42765:SF1">
    <property type="entry name" value="ISOLEUCINE--TRNA LIGASE, MITOCHONDRIAL"/>
    <property type="match status" value="1"/>
</dbReference>
<dbReference type="PANTHER" id="PTHR42765">
    <property type="entry name" value="SOLEUCYL-TRNA SYNTHETASE"/>
    <property type="match status" value="1"/>
</dbReference>
<dbReference type="Pfam" id="PF08264">
    <property type="entry name" value="Anticodon_1"/>
    <property type="match status" value="1"/>
</dbReference>
<dbReference type="Pfam" id="PF00133">
    <property type="entry name" value="tRNA-synt_1"/>
    <property type="match status" value="1"/>
</dbReference>
<dbReference type="Pfam" id="PF06827">
    <property type="entry name" value="zf-FPG_IleRS"/>
    <property type="match status" value="1"/>
</dbReference>
<dbReference type="PRINTS" id="PR00984">
    <property type="entry name" value="TRNASYNTHILE"/>
</dbReference>
<dbReference type="SUPFAM" id="SSF47323">
    <property type="entry name" value="Anticodon-binding domain of a subclass of class I aminoacyl-tRNA synthetases"/>
    <property type="match status" value="1"/>
</dbReference>
<dbReference type="SUPFAM" id="SSF52374">
    <property type="entry name" value="Nucleotidylyl transferase"/>
    <property type="match status" value="1"/>
</dbReference>
<dbReference type="SUPFAM" id="SSF50677">
    <property type="entry name" value="ValRS/IleRS/LeuRS editing domain"/>
    <property type="match status" value="1"/>
</dbReference>
<dbReference type="PROSITE" id="PS00178">
    <property type="entry name" value="AA_TRNA_LIGASE_I"/>
    <property type="match status" value="1"/>
</dbReference>